<proteinExistence type="inferred from homology"/>
<feature type="chain" id="PRO_0000152409" description="Imidazole glycerol phosphate synthase subunit HisH 2">
    <location>
        <begin position="1"/>
        <end position="202"/>
    </location>
</feature>
<feature type="domain" description="Glutamine amidotransferase type-1">
    <location>
        <begin position="1"/>
        <end position="202"/>
    </location>
</feature>
<feature type="active site" description="Nucleophile" evidence="1">
    <location>
        <position position="80"/>
    </location>
</feature>
<feature type="active site" evidence="1">
    <location>
        <position position="183"/>
    </location>
</feature>
<feature type="active site" evidence="1">
    <location>
        <position position="185"/>
    </location>
</feature>
<protein>
    <recommendedName>
        <fullName>Imidazole glycerol phosphate synthase subunit HisH 2</fullName>
        <ecNumber>4.3.2.10</ecNumber>
    </recommendedName>
    <alternativeName>
        <fullName>IGP synthase glutaminase subunit 2</fullName>
        <ecNumber>3.5.1.2</ecNumber>
    </alternativeName>
    <alternativeName>
        <fullName>IGP synthase subunit HisH 2</fullName>
    </alternativeName>
    <alternativeName>
        <fullName>ImGP synthase subunit HisH 2</fullName>
        <shortName>IGPS subunit HisH 2</shortName>
    </alternativeName>
</protein>
<gene>
    <name type="primary">hisH2</name>
    <name type="synonym">hisH</name>
    <name type="ordered locus">PA3152</name>
</gene>
<reference key="1">
    <citation type="journal article" date="1996" name="Mol. Microbiol.">
        <title>Molecular characterization of the Pseudomonas aeruginosa serotype O5 (PAO1) B-band lipopolysaccharide gene cluster.</title>
        <authorList>
            <person name="Burrows L.L."/>
            <person name="Charter D.F."/>
            <person name="Lam J.S."/>
        </authorList>
    </citation>
    <scope>NUCLEOTIDE SEQUENCE [GENOMIC DNA]</scope>
    <source>
        <strain>ATCC 15692 / DSM 22644 / CIP 104116 / JCM 14847 / LMG 12228 / 1C / PRS 101 / PAO1</strain>
    </source>
</reference>
<reference key="2">
    <citation type="journal article" date="2002" name="J. Bacteriol.">
        <title>Genetic variation at the O-antigen biosynthetic locus in Pseudomonas aeruginosa.</title>
        <authorList>
            <person name="Raymond C.K."/>
            <person name="Sims E.H."/>
            <person name="Kas A."/>
            <person name="Spencer D.H."/>
            <person name="Kutyavin T.V."/>
            <person name="Ivey R.G."/>
            <person name="Zhou Y."/>
            <person name="Kaul R."/>
            <person name="Clendenning J.B."/>
            <person name="Olson M.V."/>
        </authorList>
    </citation>
    <scope>NUCLEOTIDE SEQUENCE [GENOMIC DNA]</scope>
    <source>
        <strain>Serotype O16</strain>
        <strain>Serotype O18</strain>
        <strain>Serotype O2</strain>
        <strain>Serotype O20</strain>
        <strain>Serotype O5</strain>
    </source>
</reference>
<reference key="3">
    <citation type="journal article" date="2000" name="Nature">
        <title>Complete genome sequence of Pseudomonas aeruginosa PAO1, an opportunistic pathogen.</title>
        <authorList>
            <person name="Stover C.K."/>
            <person name="Pham X.-Q.T."/>
            <person name="Erwin A.L."/>
            <person name="Mizoguchi S.D."/>
            <person name="Warrener P."/>
            <person name="Hickey M.J."/>
            <person name="Brinkman F.S.L."/>
            <person name="Hufnagle W.O."/>
            <person name="Kowalik D.J."/>
            <person name="Lagrou M."/>
            <person name="Garber R.L."/>
            <person name="Goltry L."/>
            <person name="Tolentino E."/>
            <person name="Westbrock-Wadman S."/>
            <person name="Yuan Y."/>
            <person name="Brody L.L."/>
            <person name="Coulter S.N."/>
            <person name="Folger K.R."/>
            <person name="Kas A."/>
            <person name="Larbig K."/>
            <person name="Lim R.M."/>
            <person name="Smith K.A."/>
            <person name="Spencer D.H."/>
            <person name="Wong G.K.-S."/>
            <person name="Wu Z."/>
            <person name="Paulsen I.T."/>
            <person name="Reizer J."/>
            <person name="Saier M.H. Jr."/>
            <person name="Hancock R.E.W."/>
            <person name="Lory S."/>
            <person name="Olson M.V."/>
        </authorList>
    </citation>
    <scope>NUCLEOTIDE SEQUENCE [LARGE SCALE GENOMIC DNA]</scope>
    <source>
        <strain>ATCC 15692 / DSM 22644 / CIP 104116 / JCM 14847 / LMG 12228 / 1C / PRS 101 / PAO1</strain>
    </source>
</reference>
<sequence>MIVVIDYGVGNIASVLNMLKRVGAKAKASDSREDIEQAEKLILPGVGAFDAGMQTLRKSGLVDVLTEQVMIKRKPVMGVCLGSQMLGLRSEEGAEPGLGWIDMDSVRFERRDDRKVPHMGWNQVSPQLEHPILSGINEQSRFYFVHSYYMVPKDPDDILLSCNYGQKFTAAVARDNVFGFQFHPEKSHKFGMQLFKNFVELV</sequence>
<evidence type="ECO:0000250" key="1"/>
<evidence type="ECO:0000305" key="2"/>
<comment type="function">
    <text evidence="1">IGPS catalyzes the conversion of PRFAR and glutamine to IGP, AICAR and glutamate. The HisH subunit catalyzes the hydrolysis of glutamine to glutamate and ammonia as part of the synthesis of IGP and AICAR. The resulting ammonia molecule is channeled to the active site of HisF (By similarity).</text>
</comment>
<comment type="catalytic activity">
    <reaction>
        <text>5-[(5-phospho-1-deoxy-D-ribulos-1-ylimino)methylamino]-1-(5-phospho-beta-D-ribosyl)imidazole-4-carboxamide + L-glutamine = D-erythro-1-(imidazol-4-yl)glycerol 3-phosphate + 5-amino-1-(5-phospho-beta-D-ribosyl)imidazole-4-carboxamide + L-glutamate + H(+)</text>
        <dbReference type="Rhea" id="RHEA:24793"/>
        <dbReference type="ChEBI" id="CHEBI:15378"/>
        <dbReference type="ChEBI" id="CHEBI:29985"/>
        <dbReference type="ChEBI" id="CHEBI:58278"/>
        <dbReference type="ChEBI" id="CHEBI:58359"/>
        <dbReference type="ChEBI" id="CHEBI:58475"/>
        <dbReference type="ChEBI" id="CHEBI:58525"/>
        <dbReference type="EC" id="4.3.2.10"/>
    </reaction>
</comment>
<comment type="catalytic activity">
    <reaction>
        <text>L-glutamine + H2O = L-glutamate + NH4(+)</text>
        <dbReference type="Rhea" id="RHEA:15889"/>
        <dbReference type="ChEBI" id="CHEBI:15377"/>
        <dbReference type="ChEBI" id="CHEBI:28938"/>
        <dbReference type="ChEBI" id="CHEBI:29985"/>
        <dbReference type="ChEBI" id="CHEBI:58359"/>
        <dbReference type="EC" id="3.5.1.2"/>
    </reaction>
</comment>
<comment type="pathway">
    <text>Amino-acid biosynthesis; L-histidine biosynthesis; L-histidine from 5-phospho-alpha-D-ribose 1-diphosphate: step 5/9.</text>
</comment>
<comment type="subunit">
    <text evidence="1">Heterodimer of HisH and HisF.</text>
</comment>
<comment type="subcellular location">
    <subcellularLocation>
        <location evidence="1">Cytoplasm</location>
    </subcellularLocation>
</comment>
<comment type="sequence caution" evidence="2">
    <conflict type="erroneous initiation">
        <sequence resource="EMBL-CDS" id="AAC45859"/>
    </conflict>
</comment>
<dbReference type="EC" id="4.3.2.10"/>
<dbReference type="EC" id="3.5.1.2"/>
<dbReference type="EMBL" id="U50396">
    <property type="protein sequence ID" value="AAC45859.1"/>
    <property type="status" value="ALT_INIT"/>
    <property type="molecule type" value="Genomic_DNA"/>
</dbReference>
<dbReference type="EMBL" id="AF498408">
    <property type="protein sequence ID" value="AAM27664.1"/>
    <property type="molecule type" value="Genomic_DNA"/>
</dbReference>
<dbReference type="EMBL" id="AF498410">
    <property type="protein sequence ID" value="AAM27695.1"/>
    <property type="molecule type" value="Genomic_DNA"/>
</dbReference>
<dbReference type="EMBL" id="AF498412">
    <property type="protein sequence ID" value="AAM27730.1"/>
    <property type="molecule type" value="Genomic_DNA"/>
</dbReference>
<dbReference type="EMBL" id="AF498413">
    <property type="protein sequence ID" value="AAM27750.1"/>
    <property type="molecule type" value="Genomic_DNA"/>
</dbReference>
<dbReference type="EMBL" id="AF498416">
    <property type="protein sequence ID" value="AAM27803.1"/>
    <property type="molecule type" value="Genomic_DNA"/>
</dbReference>
<dbReference type="EMBL" id="AE004091">
    <property type="protein sequence ID" value="AAG06540.1"/>
    <property type="molecule type" value="Genomic_DNA"/>
</dbReference>
<dbReference type="PIR" id="B83251">
    <property type="entry name" value="B83251"/>
</dbReference>
<dbReference type="RefSeq" id="NP_251842.1">
    <property type="nucleotide sequence ID" value="NC_002516.2"/>
</dbReference>
<dbReference type="RefSeq" id="WP_003113422.1">
    <property type="nucleotide sequence ID" value="NZ_QZGE01000023.1"/>
</dbReference>
<dbReference type="SMR" id="P72138"/>
<dbReference type="FunCoup" id="P72138">
    <property type="interactions" value="341"/>
</dbReference>
<dbReference type="STRING" id="208964.PA3152"/>
<dbReference type="MEROPS" id="C26.965"/>
<dbReference type="PaxDb" id="208964-PA3152"/>
<dbReference type="DNASU" id="882589"/>
<dbReference type="GeneID" id="882589"/>
<dbReference type="KEGG" id="pae:PA3152"/>
<dbReference type="PseudoCAP" id="PA3152"/>
<dbReference type="HOGENOM" id="CLU_071837_2_0_6"/>
<dbReference type="InParanoid" id="P72138"/>
<dbReference type="OrthoDB" id="9807137at2"/>
<dbReference type="PhylomeDB" id="P72138"/>
<dbReference type="BioCyc" id="PAER208964:G1FZ6-3212-MONOMER"/>
<dbReference type="UniPathway" id="UPA00031">
    <property type="reaction ID" value="UER00010"/>
</dbReference>
<dbReference type="Proteomes" id="UP000002438">
    <property type="component" value="Chromosome"/>
</dbReference>
<dbReference type="GO" id="GO:0005737">
    <property type="term" value="C:cytoplasm"/>
    <property type="evidence" value="ECO:0007669"/>
    <property type="project" value="UniProtKB-SubCell"/>
</dbReference>
<dbReference type="GO" id="GO:0004359">
    <property type="term" value="F:glutaminase activity"/>
    <property type="evidence" value="ECO:0007669"/>
    <property type="project" value="UniProtKB-EC"/>
</dbReference>
<dbReference type="GO" id="GO:0000107">
    <property type="term" value="F:imidazoleglycerol-phosphate synthase activity"/>
    <property type="evidence" value="ECO:0000318"/>
    <property type="project" value="GO_Central"/>
</dbReference>
<dbReference type="GO" id="GO:0016829">
    <property type="term" value="F:lyase activity"/>
    <property type="evidence" value="ECO:0007669"/>
    <property type="project" value="UniProtKB-KW"/>
</dbReference>
<dbReference type="GO" id="GO:0000105">
    <property type="term" value="P:L-histidine biosynthetic process"/>
    <property type="evidence" value="ECO:0007669"/>
    <property type="project" value="UniProtKB-UniRule"/>
</dbReference>
<dbReference type="GO" id="GO:0009243">
    <property type="term" value="P:O antigen biosynthetic process"/>
    <property type="evidence" value="ECO:0000269"/>
    <property type="project" value="PseudoCAP"/>
</dbReference>
<dbReference type="CDD" id="cd01748">
    <property type="entry name" value="GATase1_IGP_Synthase"/>
    <property type="match status" value="1"/>
</dbReference>
<dbReference type="Gene3D" id="3.40.50.880">
    <property type="match status" value="1"/>
</dbReference>
<dbReference type="HAMAP" id="MF_00278">
    <property type="entry name" value="HisH"/>
    <property type="match status" value="1"/>
</dbReference>
<dbReference type="InterPro" id="IPR029062">
    <property type="entry name" value="Class_I_gatase-like"/>
</dbReference>
<dbReference type="InterPro" id="IPR017926">
    <property type="entry name" value="GATASE"/>
</dbReference>
<dbReference type="InterPro" id="IPR010139">
    <property type="entry name" value="Imidazole-glycPsynth_HisH"/>
</dbReference>
<dbReference type="NCBIfam" id="TIGR01855">
    <property type="entry name" value="IMP_synth_hisH"/>
    <property type="match status" value="1"/>
</dbReference>
<dbReference type="PANTHER" id="PTHR42701">
    <property type="entry name" value="IMIDAZOLE GLYCEROL PHOSPHATE SYNTHASE SUBUNIT HISH"/>
    <property type="match status" value="1"/>
</dbReference>
<dbReference type="PANTHER" id="PTHR42701:SF1">
    <property type="entry name" value="IMIDAZOLE GLYCEROL PHOSPHATE SYNTHASE SUBUNIT HISH"/>
    <property type="match status" value="1"/>
</dbReference>
<dbReference type="Pfam" id="PF00117">
    <property type="entry name" value="GATase"/>
    <property type="match status" value="1"/>
</dbReference>
<dbReference type="PIRSF" id="PIRSF000495">
    <property type="entry name" value="Amidotransf_hisH"/>
    <property type="match status" value="1"/>
</dbReference>
<dbReference type="SUPFAM" id="SSF52317">
    <property type="entry name" value="Class I glutamine amidotransferase-like"/>
    <property type="match status" value="1"/>
</dbReference>
<dbReference type="PROSITE" id="PS51273">
    <property type="entry name" value="GATASE_TYPE_1"/>
    <property type="match status" value="1"/>
</dbReference>
<organism>
    <name type="scientific">Pseudomonas aeruginosa (strain ATCC 15692 / DSM 22644 / CIP 104116 / JCM 14847 / LMG 12228 / 1C / PRS 101 / PAO1)</name>
    <dbReference type="NCBI Taxonomy" id="208964"/>
    <lineage>
        <taxon>Bacteria</taxon>
        <taxon>Pseudomonadati</taxon>
        <taxon>Pseudomonadota</taxon>
        <taxon>Gammaproteobacteria</taxon>
        <taxon>Pseudomonadales</taxon>
        <taxon>Pseudomonadaceae</taxon>
        <taxon>Pseudomonas</taxon>
    </lineage>
</organism>
<accession>P72138</accession>
<name>HIS52_PSEAE</name>
<keyword id="KW-0028">Amino-acid biosynthesis</keyword>
<keyword id="KW-0963">Cytoplasm</keyword>
<keyword id="KW-0315">Glutamine amidotransferase</keyword>
<keyword id="KW-0368">Histidine biosynthesis</keyword>
<keyword id="KW-0378">Hydrolase</keyword>
<keyword id="KW-0456">Lyase</keyword>
<keyword id="KW-1185">Reference proteome</keyword>